<organism>
    <name type="scientific">Thermoplasma volcanium (strain ATCC 51530 / DSM 4299 / JCM 9571 / NBRC 15438 / GSS1)</name>
    <dbReference type="NCBI Taxonomy" id="273116"/>
    <lineage>
        <taxon>Archaea</taxon>
        <taxon>Methanobacteriati</taxon>
        <taxon>Thermoplasmatota</taxon>
        <taxon>Thermoplasmata</taxon>
        <taxon>Thermoplasmatales</taxon>
        <taxon>Thermoplasmataceae</taxon>
        <taxon>Thermoplasma</taxon>
    </lineage>
</organism>
<comment type="function">
    <text evidence="1">Catalyzes the interconversion of 2-phosphoglycerate and 3-phosphoglycerate.</text>
</comment>
<comment type="catalytic activity">
    <reaction evidence="1">
        <text>(2R)-2-phosphoglycerate = (2R)-3-phosphoglycerate</text>
        <dbReference type="Rhea" id="RHEA:15901"/>
        <dbReference type="ChEBI" id="CHEBI:58272"/>
        <dbReference type="ChEBI" id="CHEBI:58289"/>
        <dbReference type="EC" id="5.4.2.12"/>
    </reaction>
</comment>
<comment type="pathway">
    <text evidence="1">Carbohydrate degradation; glycolysis; pyruvate from D-glyceraldehyde 3-phosphate: step 3/5.</text>
</comment>
<comment type="similarity">
    <text evidence="1">Belongs to the BPG-independent phosphoglycerate mutase family. A-PGAM subfamily.</text>
</comment>
<sequence>MIDVKSIILIVLDGLGDRPGEILGYRTPLQAAYHPNMNRMASLGMTGLMHPISPGIRSGSDTSHMSLLGYDPRVYYQGRGPFEALGLHMDMKPGDLAFRANFATNRDGKIIDRRAGRINAGNDQLASAISIDIGNYKFRVKSGVEHRAALVVSGPNLSDKISDSDPHSEGKPPEPIRPLDPSADSTAKIMNEYLKRIREILRDHPVNVEREKNGQIPGNELLIRSAGKVPDIPSFQEKNGITGACVVGSPWLKGLCRLLGMAVIDVPGAAGTINSNYTGKIKTAIDASKRYDFVLVNIKATDVAGHDGDYELKRRVIEDIDIAMEPLLGQSDRIVVAITGDHSTPCSVKDHSGDPVPIVFYTDGIYSDDVKLFDEVSAMKGALRITTQDVLNILMEMAGRAEKFGS</sequence>
<accession>Q979H8</accession>
<name>APGM_THEVO</name>
<evidence type="ECO:0000255" key="1">
    <source>
        <dbReference type="HAMAP-Rule" id="MF_01402"/>
    </source>
</evidence>
<evidence type="ECO:0000256" key="2">
    <source>
        <dbReference type="SAM" id="MobiDB-lite"/>
    </source>
</evidence>
<reference key="1">
    <citation type="journal article" date="2000" name="Proc. Natl. Acad. Sci. U.S.A.">
        <title>Archaeal adaptation to higher temperatures revealed by genomic sequence of Thermoplasma volcanium.</title>
        <authorList>
            <person name="Kawashima T."/>
            <person name="Amano N."/>
            <person name="Koike H."/>
            <person name="Makino S."/>
            <person name="Higuchi S."/>
            <person name="Kawashima-Ohya Y."/>
            <person name="Watanabe K."/>
            <person name="Yamazaki M."/>
            <person name="Kanehori K."/>
            <person name="Kawamoto T."/>
            <person name="Nunoshiba T."/>
            <person name="Yamamoto Y."/>
            <person name="Aramaki H."/>
            <person name="Makino K."/>
            <person name="Suzuki M."/>
        </authorList>
    </citation>
    <scope>NUCLEOTIDE SEQUENCE [LARGE SCALE GENOMIC DNA]</scope>
    <source>
        <strain>ATCC 51530 / DSM 4299 / JCM 9571 / NBRC 15438 / GSS1</strain>
    </source>
</reference>
<keyword id="KW-0324">Glycolysis</keyword>
<keyword id="KW-0413">Isomerase</keyword>
<feature type="chain" id="PRO_0000138151" description="2,3-bisphosphoglycerate-independent phosphoglycerate mutase">
    <location>
        <begin position="1"/>
        <end position="406"/>
    </location>
</feature>
<feature type="region of interest" description="Disordered" evidence="2">
    <location>
        <begin position="156"/>
        <end position="183"/>
    </location>
</feature>
<feature type="compositionally biased region" description="Basic and acidic residues" evidence="2">
    <location>
        <begin position="160"/>
        <end position="174"/>
    </location>
</feature>
<dbReference type="EC" id="5.4.2.12" evidence="1"/>
<dbReference type="EMBL" id="BA000011">
    <property type="protein sequence ID" value="BAB60325.1"/>
    <property type="molecule type" value="Genomic_DNA"/>
</dbReference>
<dbReference type="RefSeq" id="WP_010917416.1">
    <property type="nucleotide sequence ID" value="NC_002689.2"/>
</dbReference>
<dbReference type="SMR" id="Q979H8"/>
<dbReference type="STRING" id="273116.gene:9381984"/>
<dbReference type="PaxDb" id="273116-14325421"/>
<dbReference type="GeneID" id="1441298"/>
<dbReference type="KEGG" id="tvo:TVG1213330"/>
<dbReference type="eggNOG" id="arCOG01696">
    <property type="taxonomic scope" value="Archaea"/>
</dbReference>
<dbReference type="HOGENOM" id="CLU_034906_2_0_2"/>
<dbReference type="OrthoDB" id="52918at2157"/>
<dbReference type="PhylomeDB" id="Q979H8"/>
<dbReference type="UniPathway" id="UPA00109">
    <property type="reaction ID" value="UER00186"/>
</dbReference>
<dbReference type="Proteomes" id="UP000001017">
    <property type="component" value="Chromosome"/>
</dbReference>
<dbReference type="GO" id="GO:0046872">
    <property type="term" value="F:metal ion binding"/>
    <property type="evidence" value="ECO:0007669"/>
    <property type="project" value="InterPro"/>
</dbReference>
<dbReference type="GO" id="GO:0004619">
    <property type="term" value="F:phosphoglycerate mutase activity"/>
    <property type="evidence" value="ECO:0007669"/>
    <property type="project" value="UniProtKB-EC"/>
</dbReference>
<dbReference type="GO" id="GO:0006096">
    <property type="term" value="P:glycolytic process"/>
    <property type="evidence" value="ECO:0007669"/>
    <property type="project" value="UniProtKB-UniRule"/>
</dbReference>
<dbReference type="CDD" id="cd16011">
    <property type="entry name" value="iPGM_like"/>
    <property type="match status" value="1"/>
</dbReference>
<dbReference type="Gene3D" id="3.40.720.10">
    <property type="entry name" value="Alkaline Phosphatase, subunit A"/>
    <property type="match status" value="2"/>
</dbReference>
<dbReference type="HAMAP" id="MF_01402_A">
    <property type="entry name" value="ApgM_A"/>
    <property type="match status" value="1"/>
</dbReference>
<dbReference type="InterPro" id="IPR017850">
    <property type="entry name" value="Alkaline_phosphatase_core_sf"/>
</dbReference>
<dbReference type="InterPro" id="IPR023665">
    <property type="entry name" value="ApgAM_prokaryotes"/>
</dbReference>
<dbReference type="InterPro" id="IPR006124">
    <property type="entry name" value="Metalloenzyme"/>
</dbReference>
<dbReference type="InterPro" id="IPR004456">
    <property type="entry name" value="Pglycerate_mutase_ApgM"/>
</dbReference>
<dbReference type="NCBIfam" id="TIGR00306">
    <property type="entry name" value="apgM"/>
    <property type="match status" value="1"/>
</dbReference>
<dbReference type="NCBIfam" id="NF003104">
    <property type="entry name" value="PRK04024.1"/>
    <property type="match status" value="1"/>
</dbReference>
<dbReference type="PANTHER" id="PTHR31209">
    <property type="entry name" value="COFACTOR-INDEPENDENT PHOSPHOGLYCERATE MUTASE"/>
    <property type="match status" value="1"/>
</dbReference>
<dbReference type="PANTHER" id="PTHR31209:SF0">
    <property type="entry name" value="METALLOENZYME DOMAIN-CONTAINING PROTEIN"/>
    <property type="match status" value="1"/>
</dbReference>
<dbReference type="Pfam" id="PF01676">
    <property type="entry name" value="Metalloenzyme"/>
    <property type="match status" value="1"/>
</dbReference>
<dbReference type="Pfam" id="PF10143">
    <property type="entry name" value="PhosphMutase"/>
    <property type="match status" value="1"/>
</dbReference>
<dbReference type="PIRSF" id="PIRSF006392">
    <property type="entry name" value="IPGAM_arch"/>
    <property type="match status" value="1"/>
</dbReference>
<dbReference type="SUPFAM" id="SSF53649">
    <property type="entry name" value="Alkaline phosphatase-like"/>
    <property type="match status" value="1"/>
</dbReference>
<proteinExistence type="inferred from homology"/>
<gene>
    <name evidence="1" type="primary">apgM</name>
    <name type="ordered locus">TV1183</name>
    <name type="ORF">TVG1213330</name>
</gene>
<protein>
    <recommendedName>
        <fullName evidence="1">2,3-bisphosphoglycerate-independent phosphoglycerate mutase</fullName>
        <shortName evidence="1">BPG-independent PGAM</shortName>
        <shortName evidence="1">Phosphoglyceromutase</shortName>
        <shortName evidence="1">aPGAM</shortName>
        <ecNumber evidence="1">5.4.2.12</ecNumber>
    </recommendedName>
</protein>